<evidence type="ECO:0000250" key="1"/>
<evidence type="ECO:0000255" key="2"/>
<evidence type="ECO:0000256" key="3">
    <source>
        <dbReference type="SAM" id="MobiDB-lite"/>
    </source>
</evidence>
<evidence type="ECO:0000305" key="4"/>
<comment type="function">
    <text evidence="1">Catalyzes an early step in the biosynthesis of tetrapyrroles. Binds two molecules of 5-aminolevulinate per subunit, each at a distinct site, and catalyzes their condensation to form porphobilinogen (By similarity).</text>
</comment>
<comment type="catalytic activity">
    <reaction>
        <text>2 5-aminolevulinate = porphobilinogen + 2 H2O + H(+)</text>
        <dbReference type="Rhea" id="RHEA:24064"/>
        <dbReference type="ChEBI" id="CHEBI:15377"/>
        <dbReference type="ChEBI" id="CHEBI:15378"/>
        <dbReference type="ChEBI" id="CHEBI:58126"/>
        <dbReference type="ChEBI" id="CHEBI:356416"/>
        <dbReference type="EC" id="4.2.1.24"/>
    </reaction>
</comment>
<comment type="cofactor">
    <cofactor evidence="1">
        <name>Mg(2+)</name>
        <dbReference type="ChEBI" id="CHEBI:18420"/>
    </cofactor>
    <text evidence="1">Binds 2 magnesium ions per monomer. The first magnesium ion is required for catalysis. The second functions as allosteric activator.</text>
</comment>
<comment type="pathway">
    <text>Porphyrin-containing compound metabolism; protoporphyrin-IX biosynthesis; coproporphyrinogen-III from 5-aminolevulinate: step 1/4.</text>
</comment>
<comment type="subunit">
    <text evidence="1">Homooctamer.</text>
</comment>
<comment type="subcellular location">
    <subcellularLocation>
        <location>Plastid</location>
        <location>Chloroplast</location>
    </subcellularLocation>
</comment>
<comment type="similarity">
    <text evidence="4">Belongs to the ALAD family.</text>
</comment>
<dbReference type="EC" id="4.2.1.24"/>
<dbReference type="EMBL" id="X89886">
    <property type="protein sequence ID" value="CAA61978.1"/>
    <property type="molecule type" value="mRNA"/>
</dbReference>
<dbReference type="EMBL" id="DS545108">
    <property type="protein sequence ID" value="EDQ57858.1"/>
    <property type="molecule type" value="Genomic_DNA"/>
</dbReference>
<dbReference type="PIR" id="S58169">
    <property type="entry name" value="S58169"/>
</dbReference>
<dbReference type="RefSeq" id="XP_001777328.1">
    <property type="nucleotide sequence ID" value="XM_001777276.1"/>
</dbReference>
<dbReference type="SMR" id="Q43058"/>
<dbReference type="FunCoup" id="Q43058">
    <property type="interactions" value="3662"/>
</dbReference>
<dbReference type="PaxDb" id="3218-PP1S219_94V6.1"/>
<dbReference type="EnsemblPlants" id="Pp3c4_13690V3.1">
    <property type="protein sequence ID" value="Pp3c4_13690V3.1"/>
    <property type="gene ID" value="Pp3c4_13690"/>
</dbReference>
<dbReference type="EnsemblPlants" id="Pp3c4_13690V3.3">
    <property type="protein sequence ID" value="Pp3c4_13690V3.3"/>
    <property type="gene ID" value="Pp3c4_13690"/>
</dbReference>
<dbReference type="EnsemblPlants" id="Pp3c4_13690V3.4">
    <property type="protein sequence ID" value="Pp3c4_13690V3.4"/>
    <property type="gene ID" value="Pp3c4_13690"/>
</dbReference>
<dbReference type="EnsemblPlants" id="Pp3c4_13690V3.5">
    <property type="protein sequence ID" value="Pp3c4_13690V3.5"/>
    <property type="gene ID" value="Pp3c4_13690"/>
</dbReference>
<dbReference type="Gramene" id="Pp3c4_13690V3.1">
    <property type="protein sequence ID" value="Pp3c4_13690V3.1"/>
    <property type="gene ID" value="Pp3c4_13690"/>
</dbReference>
<dbReference type="Gramene" id="Pp3c4_13690V3.3">
    <property type="protein sequence ID" value="Pp3c4_13690V3.3"/>
    <property type="gene ID" value="Pp3c4_13690"/>
</dbReference>
<dbReference type="Gramene" id="Pp3c4_13690V3.4">
    <property type="protein sequence ID" value="Pp3c4_13690V3.4"/>
    <property type="gene ID" value="Pp3c4_13690"/>
</dbReference>
<dbReference type="Gramene" id="Pp3c4_13690V3.5">
    <property type="protein sequence ID" value="Pp3c4_13690V3.5"/>
    <property type="gene ID" value="Pp3c4_13690"/>
</dbReference>
<dbReference type="eggNOG" id="KOG2794">
    <property type="taxonomic scope" value="Eukaryota"/>
</dbReference>
<dbReference type="HOGENOM" id="CLU_035731_1_2_1"/>
<dbReference type="InParanoid" id="Q43058"/>
<dbReference type="OrthoDB" id="1530at2759"/>
<dbReference type="UniPathway" id="UPA00251">
    <property type="reaction ID" value="UER00318"/>
</dbReference>
<dbReference type="Proteomes" id="UP000006727">
    <property type="component" value="Chromosome 4"/>
</dbReference>
<dbReference type="GO" id="GO:0009507">
    <property type="term" value="C:chloroplast"/>
    <property type="evidence" value="ECO:0007669"/>
    <property type="project" value="UniProtKB-SubCell"/>
</dbReference>
<dbReference type="GO" id="GO:0005829">
    <property type="term" value="C:cytosol"/>
    <property type="evidence" value="ECO:0000318"/>
    <property type="project" value="GO_Central"/>
</dbReference>
<dbReference type="GO" id="GO:0004655">
    <property type="term" value="F:porphobilinogen synthase activity"/>
    <property type="evidence" value="ECO:0000318"/>
    <property type="project" value="GO_Central"/>
</dbReference>
<dbReference type="GO" id="GO:0008270">
    <property type="term" value="F:zinc ion binding"/>
    <property type="evidence" value="ECO:0000318"/>
    <property type="project" value="GO_Central"/>
</dbReference>
<dbReference type="GO" id="GO:0015995">
    <property type="term" value="P:chlorophyll biosynthetic process"/>
    <property type="evidence" value="ECO:0007669"/>
    <property type="project" value="UniProtKB-KW"/>
</dbReference>
<dbReference type="GO" id="GO:0006783">
    <property type="term" value="P:heme biosynthetic process"/>
    <property type="evidence" value="ECO:0000318"/>
    <property type="project" value="GO_Central"/>
</dbReference>
<dbReference type="GO" id="GO:0006782">
    <property type="term" value="P:protoporphyrinogen IX biosynthetic process"/>
    <property type="evidence" value="ECO:0007669"/>
    <property type="project" value="UniProtKB-UniPathway"/>
</dbReference>
<dbReference type="CDD" id="cd04823">
    <property type="entry name" value="ALAD_PBGS_aspartate_rich"/>
    <property type="match status" value="1"/>
</dbReference>
<dbReference type="FunFam" id="3.20.20.70:FF:000101">
    <property type="entry name" value="Delta-aminolevulinic acid dehydratase"/>
    <property type="match status" value="1"/>
</dbReference>
<dbReference type="Gene3D" id="3.20.20.70">
    <property type="entry name" value="Aldolase class I"/>
    <property type="match status" value="1"/>
</dbReference>
<dbReference type="InterPro" id="IPR001731">
    <property type="entry name" value="ALAD"/>
</dbReference>
<dbReference type="InterPro" id="IPR030656">
    <property type="entry name" value="ALAD_AS"/>
</dbReference>
<dbReference type="InterPro" id="IPR013785">
    <property type="entry name" value="Aldolase_TIM"/>
</dbReference>
<dbReference type="NCBIfam" id="NF006762">
    <property type="entry name" value="PRK09283.1"/>
    <property type="match status" value="1"/>
</dbReference>
<dbReference type="PANTHER" id="PTHR11458">
    <property type="entry name" value="DELTA-AMINOLEVULINIC ACID DEHYDRATASE"/>
    <property type="match status" value="1"/>
</dbReference>
<dbReference type="PANTHER" id="PTHR11458:SF0">
    <property type="entry name" value="DELTA-AMINOLEVULINIC ACID DEHYDRATASE"/>
    <property type="match status" value="1"/>
</dbReference>
<dbReference type="Pfam" id="PF00490">
    <property type="entry name" value="ALAD"/>
    <property type="match status" value="1"/>
</dbReference>
<dbReference type="PRINTS" id="PR00144">
    <property type="entry name" value="DALDHYDRTASE"/>
</dbReference>
<dbReference type="SMART" id="SM01004">
    <property type="entry name" value="ALAD"/>
    <property type="match status" value="1"/>
</dbReference>
<dbReference type="SUPFAM" id="SSF51569">
    <property type="entry name" value="Aldolase"/>
    <property type="match status" value="1"/>
</dbReference>
<dbReference type="PROSITE" id="PS00169">
    <property type="entry name" value="D_ALA_DEHYDRATASE"/>
    <property type="match status" value="1"/>
</dbReference>
<feature type="transit peptide" description="Chloroplast" evidence="2">
    <location>
        <begin position="1"/>
        <end status="unknown"/>
    </location>
</feature>
<feature type="chain" id="PRO_0000013318" description="Delta-aminolevulinic acid dehydratase, chloroplastic">
    <location>
        <begin status="unknown"/>
        <end position="432"/>
    </location>
</feature>
<feature type="region of interest" description="Disordered" evidence="3">
    <location>
        <begin position="84"/>
        <end position="113"/>
    </location>
</feature>
<feature type="active site" description="Schiff-base intermediate with substrate" evidence="1">
    <location>
        <position position="300"/>
    </location>
</feature>
<feature type="active site" description="Schiff-base intermediate with substrate" evidence="1">
    <location>
        <position position="353"/>
    </location>
</feature>
<feature type="binding site" evidence="1">
    <location>
        <position position="310"/>
    </location>
    <ligand>
        <name>5-aminolevulinate</name>
        <dbReference type="ChEBI" id="CHEBI:356416"/>
        <label>1</label>
    </ligand>
</feature>
<feature type="binding site" evidence="1">
    <location>
        <position position="322"/>
    </location>
    <ligand>
        <name>5-aminolevulinate</name>
        <dbReference type="ChEBI" id="CHEBI:356416"/>
        <label>1</label>
    </ligand>
</feature>
<feature type="binding site" evidence="1">
    <location>
        <position position="338"/>
    </location>
    <ligand>
        <name>Mg(2+)</name>
        <dbReference type="ChEBI" id="CHEBI:18420"/>
    </ligand>
</feature>
<feature type="binding site" evidence="1">
    <location>
        <position position="379"/>
    </location>
    <ligand>
        <name>5-aminolevulinate</name>
        <dbReference type="ChEBI" id="CHEBI:356416"/>
        <label>2</label>
    </ligand>
</feature>
<feature type="binding site" evidence="1">
    <location>
        <position position="418"/>
    </location>
    <ligand>
        <name>5-aminolevulinate</name>
        <dbReference type="ChEBI" id="CHEBI:356416"/>
        <label>2</label>
    </ligand>
</feature>
<feature type="sequence conflict" description="In Ref. 1; CAA61978." evidence="4" ref="1">
    <original>G</original>
    <variation>R</variation>
    <location>
        <position position="15"/>
    </location>
</feature>
<feature type="sequence conflict" description="In Ref. 1; CAA61978." evidence="4" ref="1">
    <original>G</original>
    <variation>S</variation>
    <location>
        <position position="24"/>
    </location>
</feature>
<feature type="sequence conflict" description="In Ref. 1; CAA61978." evidence="4" ref="1">
    <original>DKF</original>
    <variation>AI</variation>
    <location>
        <begin position="212"/>
        <end position="214"/>
    </location>
</feature>
<feature type="sequence conflict" description="In Ref. 1; CAA61978." evidence="4" ref="1">
    <original>M</original>
    <variation>I</variation>
    <location>
        <position position="295"/>
    </location>
</feature>
<feature type="sequence conflict" description="In Ref. 1; CAA61978." evidence="4" ref="1">
    <original>F</original>
    <variation>S</variation>
    <location>
        <position position="309"/>
    </location>
</feature>
<feature type="sequence conflict" description="In Ref. 1; CAA61978." evidence="4" ref="1">
    <original>AAAA</original>
    <variation>GCR</variation>
    <location>
        <begin position="388"/>
        <end position="391"/>
    </location>
</feature>
<name>HEM2_PHYPA</name>
<protein>
    <recommendedName>
        <fullName>Delta-aminolevulinic acid dehydratase, chloroplastic</fullName>
        <shortName>ALADH</shortName>
        <ecNumber>4.2.1.24</ecNumber>
    </recommendedName>
    <alternativeName>
        <fullName>Porphobilinogen synthase</fullName>
    </alternativeName>
</protein>
<keyword id="KW-0021">Allosteric enzyme</keyword>
<keyword id="KW-0149">Chlorophyll biosynthesis</keyword>
<keyword id="KW-0150">Chloroplast</keyword>
<keyword id="KW-0350">Heme biosynthesis</keyword>
<keyword id="KW-0456">Lyase</keyword>
<keyword id="KW-0460">Magnesium</keyword>
<keyword id="KW-0479">Metal-binding</keyword>
<keyword id="KW-0934">Plastid</keyword>
<keyword id="KW-0627">Porphyrin biosynthesis</keyword>
<keyword id="KW-1185">Reference proteome</keyword>
<keyword id="KW-0809">Transit peptide</keyword>
<organism>
    <name type="scientific">Physcomitrium patens</name>
    <name type="common">Spreading-leaved earth moss</name>
    <name type="synonym">Physcomitrella patens</name>
    <dbReference type="NCBI Taxonomy" id="3218"/>
    <lineage>
        <taxon>Eukaryota</taxon>
        <taxon>Viridiplantae</taxon>
        <taxon>Streptophyta</taxon>
        <taxon>Embryophyta</taxon>
        <taxon>Bryophyta</taxon>
        <taxon>Bryophytina</taxon>
        <taxon>Bryopsida</taxon>
        <taxon>Funariidae</taxon>
        <taxon>Funariales</taxon>
        <taxon>Funariaceae</taxon>
        <taxon>Physcomitrium</taxon>
    </lineage>
</organism>
<reference key="1">
    <citation type="submission" date="1995-07" db="EMBL/GenBank/DDBJ databases">
        <authorList>
            <person name="Gwarek M.A."/>
        </authorList>
    </citation>
    <scope>NUCLEOTIDE SEQUENCE [MRNA]</scope>
</reference>
<reference key="2">
    <citation type="journal article" date="2008" name="Science">
        <title>The Physcomitrella genome reveals evolutionary insights into the conquest of land by plants.</title>
        <authorList>
            <person name="Rensing S.A."/>
            <person name="Lang D."/>
            <person name="Zimmer A.D."/>
            <person name="Terry A."/>
            <person name="Salamov A."/>
            <person name="Shapiro H."/>
            <person name="Nishiyama T."/>
            <person name="Perroud P.-F."/>
            <person name="Lindquist E.A."/>
            <person name="Kamisugi Y."/>
            <person name="Tanahashi T."/>
            <person name="Sakakibara K."/>
            <person name="Fujita T."/>
            <person name="Oishi K."/>
            <person name="Shin-I T."/>
            <person name="Kuroki Y."/>
            <person name="Toyoda A."/>
            <person name="Suzuki Y."/>
            <person name="Hashimoto S.-I."/>
            <person name="Yamaguchi K."/>
            <person name="Sugano S."/>
            <person name="Kohara Y."/>
            <person name="Fujiyama A."/>
            <person name="Anterola A."/>
            <person name="Aoki S."/>
            <person name="Ashton N."/>
            <person name="Barbazuk W.B."/>
            <person name="Barker E."/>
            <person name="Bennetzen J.L."/>
            <person name="Blankenship R."/>
            <person name="Cho S.H."/>
            <person name="Dutcher S.K."/>
            <person name="Estelle M."/>
            <person name="Fawcett J.A."/>
            <person name="Gundlach H."/>
            <person name="Hanada K."/>
            <person name="Heyl A."/>
            <person name="Hicks K.A."/>
            <person name="Hughes J."/>
            <person name="Lohr M."/>
            <person name="Mayer K."/>
            <person name="Melkozernov A."/>
            <person name="Murata T."/>
            <person name="Nelson D.R."/>
            <person name="Pils B."/>
            <person name="Prigge M."/>
            <person name="Reiss B."/>
            <person name="Renner T."/>
            <person name="Rombauts S."/>
            <person name="Rushton P.J."/>
            <person name="Sanderfoot A."/>
            <person name="Schween G."/>
            <person name="Shiu S.-H."/>
            <person name="Stueber K."/>
            <person name="Theodoulou F.L."/>
            <person name="Tu H."/>
            <person name="Van de Peer Y."/>
            <person name="Verrier P.J."/>
            <person name="Waters E."/>
            <person name="Wood A."/>
            <person name="Yang L."/>
            <person name="Cove D."/>
            <person name="Cuming A.C."/>
            <person name="Hasebe M."/>
            <person name="Lucas S."/>
            <person name="Mishler B.D."/>
            <person name="Reski R."/>
            <person name="Grigoriev I.V."/>
            <person name="Quatrano R.S."/>
            <person name="Boore J.L."/>
        </authorList>
    </citation>
    <scope>NUCLEOTIDE SEQUENCE [LARGE SCALE GENOMIC DNA]</scope>
    <source>
        <strain>cv. Gransden 2004</strain>
    </source>
</reference>
<proteinExistence type="evidence at transcript level"/>
<sequence>MVGVMMAAAATPGCGVSQALTACGSHEGLRRVAPVFGPGVVSVSAPCKLPRKLNVQAVAEPIAKSSPRTIEECEANVVAGNAPAAPPVPAKPSAPEGTPAISPLVMPARPRRNRRSPALRAAFQETTISPANFILPLFVHEGEQNAPIGAMPGCQRLGWRHGLIDEVYKARDVGVNSVVLFPKVPDALKSSTGDEAYNPDGLVPRCIRLLKDKFPDLVIYTDVALDPYSSDGHDGIVREDGLIMNDETVHQLCKQAVAQAQAGADVVSPSDMMDGRVGAIRKALDLAGHQDVSIMAYTAKYASAFYGPFREALDSNPRFGDKKTYQMNPANYREALIETRMDEAEGADILMVKPAMPYLDVIRLLRDNTALPISAYQVSGEYSMIRAAAAAGMLDEKKAVLESLLSIRRAGADVILTYFAIQAAQWLCAERV</sequence>
<gene>
    <name type="primary">HEMB</name>
    <name type="synonym">ALAD</name>
    <name type="ORF">PHYPADRAFT_221821</name>
</gene>
<accession>Q43058</accession>
<accession>A9TFG3</accession>